<sequence length="95" mass="9486">MAVTRTALLVVLVAGAMTMTMRGAEAQQPSCAAQLTQLAPCARVGVAPAPGQPLPAPPAECCSALGAVSHDCACGTLDIINSLPAKCGLPRVTCQ</sequence>
<reference key="1">
    <citation type="journal article" date="1996" name="Plant Mol. Biol.">
        <title>Isolation and characterization of two cDNA clones for mRNAs that are abundantly expressed in immature anthers of rice (Oryza sativa L.).</title>
        <authorList>
            <person name="Hihara Y."/>
            <person name="Hara C."/>
            <person name="Uchimiya H."/>
        </authorList>
    </citation>
    <scope>NUCLEOTIDE SEQUENCE [MRNA]</scope>
    <source>
        <tissue>Anther</tissue>
    </source>
</reference>
<reference key="2">
    <citation type="journal article" date="2005" name="Nature">
        <title>The map-based sequence of the rice genome.</title>
        <authorList>
            <consortium name="International rice genome sequencing project (IRGSP)"/>
        </authorList>
    </citation>
    <scope>NUCLEOTIDE SEQUENCE [LARGE SCALE GENOMIC DNA]</scope>
    <source>
        <strain>cv. Nipponbare</strain>
    </source>
</reference>
<reference key="3">
    <citation type="journal article" date="2008" name="Nucleic Acids Res.">
        <title>The rice annotation project database (RAP-DB): 2008 update.</title>
        <authorList>
            <consortium name="The rice annotation project (RAP)"/>
        </authorList>
    </citation>
    <scope>GENOME REANNOTATION</scope>
    <source>
        <strain>cv. Nipponbare</strain>
    </source>
</reference>
<reference key="4">
    <citation type="journal article" date="2013" name="Rice">
        <title>Improvement of the Oryza sativa Nipponbare reference genome using next generation sequence and optical map data.</title>
        <authorList>
            <person name="Kawahara Y."/>
            <person name="de la Bastide M."/>
            <person name="Hamilton J.P."/>
            <person name="Kanamori H."/>
            <person name="McCombie W.R."/>
            <person name="Ouyang S."/>
            <person name="Schwartz D.C."/>
            <person name="Tanaka T."/>
            <person name="Wu J."/>
            <person name="Zhou S."/>
            <person name="Childs K.L."/>
            <person name="Davidson R.M."/>
            <person name="Lin H."/>
            <person name="Quesada-Ocampo L."/>
            <person name="Vaillancourt B."/>
            <person name="Sakai H."/>
            <person name="Lee S.S."/>
            <person name="Kim J."/>
            <person name="Numa H."/>
            <person name="Itoh T."/>
            <person name="Buell C.R."/>
            <person name="Matsumoto T."/>
        </authorList>
    </citation>
    <scope>GENOME REANNOTATION</scope>
    <source>
        <strain>cv. Nipponbare</strain>
    </source>
</reference>
<reference key="5">
    <citation type="journal article" date="2003" name="Science">
        <title>Collection, mapping, and annotation of over 28,000 cDNA clones from japonica rice.</title>
        <authorList>
            <consortium name="The rice full-length cDNA consortium"/>
        </authorList>
    </citation>
    <scope>NUCLEOTIDE SEQUENCE [LARGE SCALE MRNA]</scope>
    <source>
        <strain>cv. Nipponbare</strain>
    </source>
</reference>
<keyword id="KW-1015">Disulfide bond</keyword>
<keyword id="KW-1185">Reference proteome</keyword>
<keyword id="KW-0964">Secreted</keyword>
<keyword id="KW-0732">Signal</keyword>
<proteinExistence type="evidence at transcript level"/>
<dbReference type="EMBL" id="D50575">
    <property type="protein sequence ID" value="BAA23617.1"/>
    <property type="molecule type" value="mRNA"/>
</dbReference>
<dbReference type="EMBL" id="AP005681">
    <property type="protein sequence ID" value="BAD46349.1"/>
    <property type="molecule type" value="Genomic_DNA"/>
</dbReference>
<dbReference type="EMBL" id="AP005864">
    <property type="protein sequence ID" value="BAD46493.1"/>
    <property type="molecule type" value="Genomic_DNA"/>
</dbReference>
<dbReference type="EMBL" id="AP008215">
    <property type="protein sequence ID" value="BAF25634.1"/>
    <property type="molecule type" value="Genomic_DNA"/>
</dbReference>
<dbReference type="EMBL" id="AP014965">
    <property type="protein sequence ID" value="BAT09040.1"/>
    <property type="molecule type" value="Genomic_DNA"/>
</dbReference>
<dbReference type="EMBL" id="AK107918">
    <property type="protein sequence ID" value="BAG98204.1"/>
    <property type="molecule type" value="mRNA"/>
</dbReference>
<dbReference type="PIR" id="T02969">
    <property type="entry name" value="T02969"/>
</dbReference>
<dbReference type="RefSeq" id="XP_015611324.1">
    <property type="nucleotide sequence ID" value="XM_015755838.1"/>
</dbReference>
<dbReference type="SMR" id="O23810"/>
<dbReference type="FunCoup" id="O23810">
    <property type="interactions" value="82"/>
</dbReference>
<dbReference type="STRING" id="39947.O23810"/>
<dbReference type="PaxDb" id="39947-O23810"/>
<dbReference type="EnsemblPlants" id="Os09t0525500-01">
    <property type="protein sequence ID" value="Os09t0525500-01"/>
    <property type="gene ID" value="Os09g0525500"/>
</dbReference>
<dbReference type="Gramene" id="Os09t0525500-01">
    <property type="protein sequence ID" value="Os09t0525500-01"/>
    <property type="gene ID" value="Os09g0525500"/>
</dbReference>
<dbReference type="KEGG" id="dosa:Os09g0525500"/>
<dbReference type="eggNOG" id="ENOG502S7SH">
    <property type="taxonomic scope" value="Eukaryota"/>
</dbReference>
<dbReference type="HOGENOM" id="CLU_177257_0_0_1"/>
<dbReference type="InParanoid" id="O23810"/>
<dbReference type="OMA" id="QSVDHDC"/>
<dbReference type="OrthoDB" id="662810at2759"/>
<dbReference type="Proteomes" id="UP000000763">
    <property type="component" value="Chromosome 9"/>
</dbReference>
<dbReference type="Proteomes" id="UP000059680">
    <property type="component" value="Chromosome 9"/>
</dbReference>
<dbReference type="GO" id="GO:0005576">
    <property type="term" value="C:extracellular region"/>
    <property type="evidence" value="ECO:0007669"/>
    <property type="project" value="UniProtKB-SubCell"/>
</dbReference>
<dbReference type="InterPro" id="IPR036312">
    <property type="entry name" value="Bifun_inhib/LTP/seed_sf"/>
</dbReference>
<dbReference type="InterPro" id="IPR016140">
    <property type="entry name" value="Bifunc_inhib/LTP/seed_store"/>
</dbReference>
<dbReference type="PANTHER" id="PTHR35501">
    <property type="entry name" value="PROTEIN YY1"/>
    <property type="match status" value="1"/>
</dbReference>
<dbReference type="PANTHER" id="PTHR35501:SF3">
    <property type="entry name" value="PROTEIN YY1"/>
    <property type="match status" value="1"/>
</dbReference>
<dbReference type="Pfam" id="PF00234">
    <property type="entry name" value="Tryp_alpha_amyl"/>
    <property type="match status" value="1"/>
</dbReference>
<dbReference type="SMART" id="SM00499">
    <property type="entry name" value="AAI"/>
    <property type="match status" value="1"/>
</dbReference>
<dbReference type="SUPFAM" id="SSF47699">
    <property type="entry name" value="Bifunctional inhibitor/lipid-transfer protein/seed storage 2S albumin"/>
    <property type="match status" value="1"/>
</dbReference>
<gene>
    <name type="ordered locus">Os09g0525500</name>
    <name type="ordered locus">LOC_Os09g35700</name>
    <name type="ORF">OJ1439_F07.3</name>
    <name type="ORF">OSJNBa0047P18.31</name>
</gene>
<comment type="subcellular location">
    <subcellularLocation>
        <location evidence="3">Secreted</location>
    </subcellularLocation>
</comment>
<comment type="tissue specificity">
    <text>Anther.</text>
</comment>
<comment type="similarity">
    <text evidence="3">Belongs to the A9/FIL1 family.</text>
</comment>
<accession>O23810</accession>
<accession>Q0J081</accession>
<accession>Q651M4</accession>
<evidence type="ECO:0000250" key="1"/>
<evidence type="ECO:0000255" key="2"/>
<evidence type="ECO:0000305" key="3"/>
<name>YY1_ORYSJ</name>
<feature type="signal peptide" evidence="2">
    <location>
        <begin position="1"/>
        <end position="26"/>
    </location>
</feature>
<feature type="chain" id="PRO_0000000240" description="Protein YY1">
    <location>
        <begin position="27"/>
        <end position="95"/>
    </location>
</feature>
<feature type="disulfide bond" evidence="1">
    <location>
        <begin position="31"/>
        <end position="72"/>
    </location>
</feature>
<feature type="disulfide bond" evidence="1">
    <location>
        <begin position="41"/>
        <end position="61"/>
    </location>
</feature>
<feature type="disulfide bond" evidence="1">
    <location>
        <begin position="62"/>
        <end position="87"/>
    </location>
</feature>
<feature type="disulfide bond" evidence="1">
    <location>
        <begin position="74"/>
        <end position="94"/>
    </location>
</feature>
<organism>
    <name type="scientific">Oryza sativa subsp. japonica</name>
    <name type="common">Rice</name>
    <dbReference type="NCBI Taxonomy" id="39947"/>
    <lineage>
        <taxon>Eukaryota</taxon>
        <taxon>Viridiplantae</taxon>
        <taxon>Streptophyta</taxon>
        <taxon>Embryophyta</taxon>
        <taxon>Tracheophyta</taxon>
        <taxon>Spermatophyta</taxon>
        <taxon>Magnoliopsida</taxon>
        <taxon>Liliopsida</taxon>
        <taxon>Poales</taxon>
        <taxon>Poaceae</taxon>
        <taxon>BOP clade</taxon>
        <taxon>Oryzoideae</taxon>
        <taxon>Oryzeae</taxon>
        <taxon>Oryzinae</taxon>
        <taxon>Oryza</taxon>
        <taxon>Oryza sativa</taxon>
    </lineage>
</organism>
<protein>
    <recommendedName>
        <fullName>Protein YY1</fullName>
    </recommendedName>
</protein>